<evidence type="ECO:0000255" key="1">
    <source>
        <dbReference type="HAMAP-Rule" id="MF_00274"/>
    </source>
</evidence>
<evidence type="ECO:0000256" key="2">
    <source>
        <dbReference type="SAM" id="MobiDB-lite"/>
    </source>
</evidence>
<gene>
    <name type="ordered locus">Bphy_0952</name>
</gene>
<name>Y952_PARP8</name>
<proteinExistence type="inferred from homology"/>
<comment type="function">
    <text evidence="1">Binds to DNA and alters its conformation. May be involved in regulation of gene expression, nucleoid organization and DNA protection.</text>
</comment>
<comment type="subunit">
    <text evidence="1">Homodimer.</text>
</comment>
<comment type="subcellular location">
    <subcellularLocation>
        <location evidence="1">Cytoplasm</location>
        <location evidence="1">Nucleoid</location>
    </subcellularLocation>
</comment>
<comment type="similarity">
    <text evidence="1">Belongs to the YbaB/EbfC family.</text>
</comment>
<organism>
    <name type="scientific">Paraburkholderia phymatum (strain DSM 17167 / CIP 108236 / LMG 21445 / STM815)</name>
    <name type="common">Burkholderia phymatum</name>
    <dbReference type="NCBI Taxonomy" id="391038"/>
    <lineage>
        <taxon>Bacteria</taxon>
        <taxon>Pseudomonadati</taxon>
        <taxon>Pseudomonadota</taxon>
        <taxon>Betaproteobacteria</taxon>
        <taxon>Burkholderiales</taxon>
        <taxon>Burkholderiaceae</taxon>
        <taxon>Paraburkholderia</taxon>
    </lineage>
</organism>
<protein>
    <recommendedName>
        <fullName evidence="1">Nucleoid-associated protein Bphy_0952</fullName>
    </recommendedName>
</protein>
<accession>B2JG59</accession>
<dbReference type="EMBL" id="CP001043">
    <property type="protein sequence ID" value="ACC70141.1"/>
    <property type="molecule type" value="Genomic_DNA"/>
</dbReference>
<dbReference type="RefSeq" id="WP_006048866.1">
    <property type="nucleotide sequence ID" value="NZ_CADFGH010000007.1"/>
</dbReference>
<dbReference type="SMR" id="B2JG59"/>
<dbReference type="STRING" id="391038.Bphy_0952"/>
<dbReference type="KEGG" id="bph:Bphy_0952"/>
<dbReference type="eggNOG" id="COG0718">
    <property type="taxonomic scope" value="Bacteria"/>
</dbReference>
<dbReference type="HOGENOM" id="CLU_140930_0_0_4"/>
<dbReference type="OrthoDB" id="9808738at2"/>
<dbReference type="Proteomes" id="UP000001192">
    <property type="component" value="Chromosome 1"/>
</dbReference>
<dbReference type="GO" id="GO:0043590">
    <property type="term" value="C:bacterial nucleoid"/>
    <property type="evidence" value="ECO:0007669"/>
    <property type="project" value="UniProtKB-UniRule"/>
</dbReference>
<dbReference type="GO" id="GO:0005829">
    <property type="term" value="C:cytosol"/>
    <property type="evidence" value="ECO:0007669"/>
    <property type="project" value="TreeGrafter"/>
</dbReference>
<dbReference type="GO" id="GO:0003677">
    <property type="term" value="F:DNA binding"/>
    <property type="evidence" value="ECO:0007669"/>
    <property type="project" value="UniProtKB-UniRule"/>
</dbReference>
<dbReference type="FunFam" id="3.30.1310.10:FF:000001">
    <property type="entry name" value="Nucleoid-associated protein YbaB"/>
    <property type="match status" value="1"/>
</dbReference>
<dbReference type="Gene3D" id="3.30.1310.10">
    <property type="entry name" value="Nucleoid-associated protein YbaB-like domain"/>
    <property type="match status" value="1"/>
</dbReference>
<dbReference type="HAMAP" id="MF_00274">
    <property type="entry name" value="DNA_YbaB_EbfC"/>
    <property type="match status" value="1"/>
</dbReference>
<dbReference type="InterPro" id="IPR036894">
    <property type="entry name" value="YbaB-like_sf"/>
</dbReference>
<dbReference type="InterPro" id="IPR004401">
    <property type="entry name" value="YbaB/EbfC"/>
</dbReference>
<dbReference type="NCBIfam" id="TIGR00103">
    <property type="entry name" value="DNA_YbaB_EbfC"/>
    <property type="match status" value="1"/>
</dbReference>
<dbReference type="PANTHER" id="PTHR33449">
    <property type="entry name" value="NUCLEOID-ASSOCIATED PROTEIN YBAB"/>
    <property type="match status" value="1"/>
</dbReference>
<dbReference type="PANTHER" id="PTHR33449:SF1">
    <property type="entry name" value="NUCLEOID-ASSOCIATED PROTEIN YBAB"/>
    <property type="match status" value="1"/>
</dbReference>
<dbReference type="Pfam" id="PF02575">
    <property type="entry name" value="YbaB_DNA_bd"/>
    <property type="match status" value="1"/>
</dbReference>
<dbReference type="PIRSF" id="PIRSF004555">
    <property type="entry name" value="UCP004555"/>
    <property type="match status" value="1"/>
</dbReference>
<dbReference type="SUPFAM" id="SSF82607">
    <property type="entry name" value="YbaB-like"/>
    <property type="match status" value="1"/>
</dbReference>
<sequence>MMKGQLAGLMKQAQQMQENMKKMQEQLAQIEVEGQSGAGLVKVTMTCKNDVRRVSIDPSLLADDKDMLEDLVAAAFNDAVRKAEATAQEKMGGMTSGLPLPPGFKLPF</sequence>
<reference key="1">
    <citation type="journal article" date="2014" name="Stand. Genomic Sci.">
        <title>Complete genome sequence of Burkholderia phymatum STM815(T), a broad host range and efficient nitrogen-fixing symbiont of Mimosa species.</title>
        <authorList>
            <person name="Moulin L."/>
            <person name="Klonowska A."/>
            <person name="Caroline B."/>
            <person name="Booth K."/>
            <person name="Vriezen J.A."/>
            <person name="Melkonian R."/>
            <person name="James E.K."/>
            <person name="Young J.P."/>
            <person name="Bena G."/>
            <person name="Hauser L."/>
            <person name="Land M."/>
            <person name="Kyrpides N."/>
            <person name="Bruce D."/>
            <person name="Chain P."/>
            <person name="Copeland A."/>
            <person name="Pitluck S."/>
            <person name="Woyke T."/>
            <person name="Lizotte-Waniewski M."/>
            <person name="Bristow J."/>
            <person name="Riley M."/>
        </authorList>
    </citation>
    <scope>NUCLEOTIDE SEQUENCE [LARGE SCALE GENOMIC DNA]</scope>
    <source>
        <strain>DSM 17167 / CIP 108236 / LMG 21445 / STM815</strain>
    </source>
</reference>
<keyword id="KW-0963">Cytoplasm</keyword>
<keyword id="KW-0238">DNA-binding</keyword>
<keyword id="KW-1185">Reference proteome</keyword>
<feature type="chain" id="PRO_1000114593" description="Nucleoid-associated protein Bphy_0952">
    <location>
        <begin position="1"/>
        <end position="108"/>
    </location>
</feature>
<feature type="region of interest" description="Disordered" evidence="2">
    <location>
        <begin position="87"/>
        <end position="108"/>
    </location>
</feature>
<feature type="compositionally biased region" description="Pro residues" evidence="2">
    <location>
        <begin position="99"/>
        <end position="108"/>
    </location>
</feature>